<organism>
    <name type="scientific">Macaca fascicularis</name>
    <name type="common">Crab-eating macaque</name>
    <name type="synonym">Cynomolgus monkey</name>
    <dbReference type="NCBI Taxonomy" id="9541"/>
    <lineage>
        <taxon>Eukaryota</taxon>
        <taxon>Metazoa</taxon>
        <taxon>Chordata</taxon>
        <taxon>Craniata</taxon>
        <taxon>Vertebrata</taxon>
        <taxon>Euteleostomi</taxon>
        <taxon>Mammalia</taxon>
        <taxon>Eutheria</taxon>
        <taxon>Euarchontoglires</taxon>
        <taxon>Primates</taxon>
        <taxon>Haplorrhini</taxon>
        <taxon>Catarrhini</taxon>
        <taxon>Cercopithecidae</taxon>
        <taxon>Cercopithecinae</taxon>
        <taxon>Macaca</taxon>
    </lineage>
</organism>
<keyword id="KW-0963">Cytoplasm</keyword>
<keyword id="KW-0539">Nucleus</keyword>
<keyword id="KW-1185">Reference proteome</keyword>
<protein>
    <recommendedName>
        <fullName>Isochorismatase domain-containing protein 2</fullName>
    </recommendedName>
</protein>
<gene>
    <name type="primary">ISOC2</name>
    <name type="ORF">QtsA-13690</name>
</gene>
<accession>Q4R826</accession>
<name>ISOC2_MACFA</name>
<reference key="1">
    <citation type="submission" date="2005-06" db="EMBL/GenBank/DDBJ databases">
        <title>DNA sequences of macaque genes expressed in brain or testis and its evolutionary implications.</title>
        <authorList>
            <consortium name="International consortium for macaque cDNA sequencing and analysis"/>
        </authorList>
    </citation>
    <scope>NUCLEOTIDE SEQUENCE [LARGE SCALE MRNA]</scope>
    <source>
        <tissue>Testis</tissue>
    </source>
</reference>
<proteinExistence type="evidence at transcript level"/>
<comment type="subunit">
    <text evidence="1">Interacts with CDKN2A.</text>
</comment>
<comment type="subcellular location">
    <subcellularLocation>
        <location evidence="1">Cytoplasm</location>
    </subcellularLocation>
    <subcellularLocation>
        <location evidence="1">Nucleus</location>
    </subcellularLocation>
    <text evidence="1">Localizes to the nucleus in the presence of CDKN2A.</text>
</comment>
<comment type="similarity">
    <text evidence="2">Belongs to the isochorismatase family.</text>
</comment>
<sequence length="205" mass="22341">MAAARPILGRVLPGSSILFLCDMQEKFRHNIAYFPQIVSVAARMLRVARLLEVPVLLTEQYPQGLGPTVPELGAEGLQPLTKTCFSMVPALQQELDSRPQLRSVLLCGIEAQACILNTTLDLLDRGLQVHVVVDACSSRSQVDRLVALARMRQSGAFLSTSEGLILQLVGDAAHPQFKEIQKLIKEPAPDSGLLGLFQGQNPLLH</sequence>
<feature type="chain" id="PRO_0000268672" description="Isochorismatase domain-containing protein 2">
    <location>
        <begin position="1"/>
        <end position="205"/>
    </location>
</feature>
<evidence type="ECO:0000250" key="1"/>
<evidence type="ECO:0000305" key="2"/>
<dbReference type="EMBL" id="AB168635">
    <property type="protein sequence ID" value="BAE00746.1"/>
    <property type="molecule type" value="mRNA"/>
</dbReference>
<dbReference type="RefSeq" id="XP_045236584.1">
    <property type="nucleotide sequence ID" value="XM_045380649.2"/>
</dbReference>
<dbReference type="RefSeq" id="XP_045236585.1">
    <property type="nucleotide sequence ID" value="XM_045380650.2"/>
</dbReference>
<dbReference type="RefSeq" id="XP_065391016.1">
    <property type="nucleotide sequence ID" value="XM_065534944.1"/>
</dbReference>
<dbReference type="RefSeq" id="XP_065391017.1">
    <property type="nucleotide sequence ID" value="XM_065534945.1"/>
</dbReference>
<dbReference type="SMR" id="Q4R826"/>
<dbReference type="STRING" id="9541.ENSMFAP00000010703"/>
<dbReference type="GeneID" id="101865854"/>
<dbReference type="Proteomes" id="UP000233100">
    <property type="component" value="Unplaced"/>
</dbReference>
<dbReference type="GO" id="GO:0005737">
    <property type="term" value="C:cytoplasm"/>
    <property type="evidence" value="ECO:0007669"/>
    <property type="project" value="UniProtKB-SubCell"/>
</dbReference>
<dbReference type="GO" id="GO:0005634">
    <property type="term" value="C:nucleus"/>
    <property type="evidence" value="ECO:0007669"/>
    <property type="project" value="UniProtKB-SubCell"/>
</dbReference>
<dbReference type="CDD" id="cd01012">
    <property type="entry name" value="YcaC_related"/>
    <property type="match status" value="1"/>
</dbReference>
<dbReference type="FunFam" id="3.40.50.850:FF:000001">
    <property type="entry name" value="Isochorismatase domain-containing protein 1"/>
    <property type="match status" value="1"/>
</dbReference>
<dbReference type="Gene3D" id="3.40.50.850">
    <property type="entry name" value="Isochorismatase-like"/>
    <property type="match status" value="1"/>
</dbReference>
<dbReference type="InterPro" id="IPR000868">
    <property type="entry name" value="Isochorismatase-like_dom"/>
</dbReference>
<dbReference type="InterPro" id="IPR036380">
    <property type="entry name" value="Isochorismatase-like_sf"/>
</dbReference>
<dbReference type="InterPro" id="IPR050993">
    <property type="entry name" value="Isochorismatase_domain"/>
</dbReference>
<dbReference type="PANTHER" id="PTHR14119">
    <property type="entry name" value="HYDROLASE"/>
    <property type="match status" value="1"/>
</dbReference>
<dbReference type="PANTHER" id="PTHR14119:SF3">
    <property type="entry name" value="ISOCHORISMATASE DOMAIN-CONTAINING PROTEIN 2"/>
    <property type="match status" value="1"/>
</dbReference>
<dbReference type="Pfam" id="PF00857">
    <property type="entry name" value="Isochorismatase"/>
    <property type="match status" value="1"/>
</dbReference>
<dbReference type="SUPFAM" id="SSF52499">
    <property type="entry name" value="Isochorismatase-like hydrolases"/>
    <property type="match status" value="1"/>
</dbReference>